<reference key="1">
    <citation type="journal article" date="2007" name="Mol. Biol. Evol.">
        <title>Chloroplast genome (cpDNA) of Cycas taitungensis and 56 cp protein-coding genes of Gnetum parvifolium: insights into cpDNA evolution and phylogeny of extant seed plants.</title>
        <authorList>
            <person name="Wu C.-S."/>
            <person name="Wang Y.-N."/>
            <person name="Liu S.-M."/>
            <person name="Chaw S.-M."/>
        </authorList>
    </citation>
    <scope>NUCLEOTIDE SEQUENCE [LARGE SCALE GENOMIC DNA]</scope>
</reference>
<reference key="2">
    <citation type="journal article" date="2009" name="Mol. Phylogenet. Evol.">
        <title>Evolution of reduced and compact chloroplast genomes (cpDNAs) in gnetophytes: Selection toward a lower-cost strategy.</title>
        <authorList>
            <person name="Wu C.-S."/>
            <person name="Lai Y.-T."/>
            <person name="Lin C.-P."/>
            <person name="Wang Y.-N."/>
            <person name="Chaw S.-M."/>
        </authorList>
    </citation>
    <scope>NUCLEOTIDE SEQUENCE [LARGE SCALE GENOMIC DNA]</scope>
</reference>
<protein>
    <recommendedName>
        <fullName evidence="1">Large ribosomal subunit protein uL16c</fullName>
    </recommendedName>
    <alternativeName>
        <fullName evidence="2">50S ribosomal protein L16, chloroplastic</fullName>
    </alternativeName>
</protein>
<keyword id="KW-0150">Chloroplast</keyword>
<keyword id="KW-0934">Plastid</keyword>
<keyword id="KW-0687">Ribonucleoprotein</keyword>
<keyword id="KW-0689">Ribosomal protein</keyword>
<organism>
    <name type="scientific">Gnetum parvifolium</name>
    <name type="common">Small-leaved jointfir</name>
    <name type="synonym">Gnetum scandens var. parvifolium</name>
    <dbReference type="NCBI Taxonomy" id="33153"/>
    <lineage>
        <taxon>Eukaryota</taxon>
        <taxon>Viridiplantae</taxon>
        <taxon>Streptophyta</taxon>
        <taxon>Embryophyta</taxon>
        <taxon>Tracheophyta</taxon>
        <taxon>Spermatophyta</taxon>
        <taxon>Gnetopsida</taxon>
        <taxon>Gnetidae</taxon>
        <taxon>Gnetales</taxon>
        <taxon>Gnetaceae</taxon>
        <taxon>Gnetum</taxon>
    </lineage>
</organism>
<name>RK16_GNEPA</name>
<geneLocation type="chloroplast"/>
<sequence length="134" mass="15245">MLSPKKTKYRKQHRGRLKGACSRGNRISFGKFAIQALEPAWITSGQIEAGRRAITRTTRRGIKIWIRIFPDKPITKKPADTRMGSGKGDPKFWVAVVKPGRMLYEMGRISESVARKAAQNVAYKMCLHTRFVKI</sequence>
<dbReference type="EMBL" id="AB295941">
    <property type="protein sequence ID" value="BAF64890.1"/>
    <property type="molecule type" value="Genomic_DNA"/>
</dbReference>
<dbReference type="EMBL" id="AP009569">
    <property type="protein sequence ID" value="BAH11257.1"/>
    <property type="molecule type" value="Genomic_DNA"/>
</dbReference>
<dbReference type="RefSeq" id="YP_002519747.1">
    <property type="nucleotide sequence ID" value="NC_011942.1"/>
</dbReference>
<dbReference type="SMR" id="A6BM45"/>
<dbReference type="GeneID" id="7368174"/>
<dbReference type="GO" id="GO:0009507">
    <property type="term" value="C:chloroplast"/>
    <property type="evidence" value="ECO:0007669"/>
    <property type="project" value="UniProtKB-SubCell"/>
</dbReference>
<dbReference type="GO" id="GO:0005762">
    <property type="term" value="C:mitochondrial large ribosomal subunit"/>
    <property type="evidence" value="ECO:0007669"/>
    <property type="project" value="TreeGrafter"/>
</dbReference>
<dbReference type="GO" id="GO:0019843">
    <property type="term" value="F:rRNA binding"/>
    <property type="evidence" value="ECO:0007669"/>
    <property type="project" value="InterPro"/>
</dbReference>
<dbReference type="GO" id="GO:0003735">
    <property type="term" value="F:structural constituent of ribosome"/>
    <property type="evidence" value="ECO:0007669"/>
    <property type="project" value="InterPro"/>
</dbReference>
<dbReference type="GO" id="GO:0032543">
    <property type="term" value="P:mitochondrial translation"/>
    <property type="evidence" value="ECO:0007669"/>
    <property type="project" value="TreeGrafter"/>
</dbReference>
<dbReference type="CDD" id="cd01433">
    <property type="entry name" value="Ribosomal_L16_L10e"/>
    <property type="match status" value="1"/>
</dbReference>
<dbReference type="FunFam" id="3.90.1170.10:FF:000001">
    <property type="entry name" value="50S ribosomal protein L16"/>
    <property type="match status" value="1"/>
</dbReference>
<dbReference type="Gene3D" id="3.90.1170.10">
    <property type="entry name" value="Ribosomal protein L10e/L16"/>
    <property type="match status" value="1"/>
</dbReference>
<dbReference type="HAMAP" id="MF_01342">
    <property type="entry name" value="Ribosomal_uL16"/>
    <property type="match status" value="1"/>
</dbReference>
<dbReference type="InterPro" id="IPR047873">
    <property type="entry name" value="Ribosomal_uL16"/>
</dbReference>
<dbReference type="InterPro" id="IPR000114">
    <property type="entry name" value="Ribosomal_uL16_bact-type"/>
</dbReference>
<dbReference type="InterPro" id="IPR020798">
    <property type="entry name" value="Ribosomal_uL16_CS"/>
</dbReference>
<dbReference type="InterPro" id="IPR016180">
    <property type="entry name" value="Ribosomal_uL16_dom"/>
</dbReference>
<dbReference type="InterPro" id="IPR036920">
    <property type="entry name" value="Ribosomal_uL16_sf"/>
</dbReference>
<dbReference type="NCBIfam" id="TIGR01164">
    <property type="entry name" value="rplP_bact"/>
    <property type="match status" value="1"/>
</dbReference>
<dbReference type="PANTHER" id="PTHR12220">
    <property type="entry name" value="50S/60S RIBOSOMAL PROTEIN L16"/>
    <property type="match status" value="1"/>
</dbReference>
<dbReference type="PANTHER" id="PTHR12220:SF13">
    <property type="entry name" value="LARGE RIBOSOMAL SUBUNIT PROTEIN UL16M"/>
    <property type="match status" value="1"/>
</dbReference>
<dbReference type="Pfam" id="PF00252">
    <property type="entry name" value="Ribosomal_L16"/>
    <property type="match status" value="1"/>
</dbReference>
<dbReference type="PRINTS" id="PR00060">
    <property type="entry name" value="RIBOSOMALL16"/>
</dbReference>
<dbReference type="SUPFAM" id="SSF54686">
    <property type="entry name" value="Ribosomal protein L16p/L10e"/>
    <property type="match status" value="1"/>
</dbReference>
<dbReference type="PROSITE" id="PS00701">
    <property type="entry name" value="RIBOSOMAL_L16_2"/>
    <property type="match status" value="1"/>
</dbReference>
<comment type="subunit">
    <text evidence="1">Part of the 50S ribosomal subunit.</text>
</comment>
<comment type="subcellular location">
    <subcellularLocation>
        <location>Plastid</location>
        <location>Chloroplast</location>
    </subcellularLocation>
</comment>
<comment type="similarity">
    <text evidence="1">Belongs to the universal ribosomal protein uL16 family.</text>
</comment>
<feature type="chain" id="PRO_0000354635" description="Large ribosomal subunit protein uL16c">
    <location>
        <begin position="1"/>
        <end position="134"/>
    </location>
</feature>
<gene>
    <name evidence="1" type="primary">rpl16</name>
</gene>
<evidence type="ECO:0000255" key="1">
    <source>
        <dbReference type="HAMAP-Rule" id="MF_01342"/>
    </source>
</evidence>
<evidence type="ECO:0000305" key="2"/>
<proteinExistence type="inferred from homology"/>
<accession>A6BM45</accession>
<accession>B7ZI77</accession>